<protein>
    <recommendedName>
        <fullName evidence="1">Photosystem II reaction center protein H</fullName>
        <shortName evidence="1">PSII-H</shortName>
    </recommendedName>
</protein>
<name>PSBH_PROM5</name>
<sequence>MGQKTALGTLLKAIGNSGQGKVVPGWGAVPIMTVIGLLLLVFLVILLQIYNQSLLLQGFSVDWNGN</sequence>
<proteinExistence type="inferred from homology"/>
<accession>A2BUN2</accession>
<dbReference type="EMBL" id="CP000552">
    <property type="protein sequence ID" value="ABM71493.1"/>
    <property type="molecule type" value="Genomic_DNA"/>
</dbReference>
<dbReference type="RefSeq" id="WP_011131889.1">
    <property type="nucleotide sequence ID" value="NC_008817.1"/>
</dbReference>
<dbReference type="SMR" id="A2BUN2"/>
<dbReference type="STRING" id="167542.P9515_02841"/>
<dbReference type="GeneID" id="60200533"/>
<dbReference type="KEGG" id="pmc:P9515_02841"/>
<dbReference type="eggNOG" id="ENOG50332MV">
    <property type="taxonomic scope" value="Bacteria"/>
</dbReference>
<dbReference type="HOGENOM" id="CLU_190203_0_0_3"/>
<dbReference type="OrthoDB" id="427121at2"/>
<dbReference type="Proteomes" id="UP000001589">
    <property type="component" value="Chromosome"/>
</dbReference>
<dbReference type="GO" id="GO:0009523">
    <property type="term" value="C:photosystem II"/>
    <property type="evidence" value="ECO:0007669"/>
    <property type="project" value="UniProtKB-KW"/>
</dbReference>
<dbReference type="GO" id="GO:0031676">
    <property type="term" value="C:plasma membrane-derived thylakoid membrane"/>
    <property type="evidence" value="ECO:0007669"/>
    <property type="project" value="UniProtKB-SubCell"/>
</dbReference>
<dbReference type="GO" id="GO:0042301">
    <property type="term" value="F:phosphate ion binding"/>
    <property type="evidence" value="ECO:0007669"/>
    <property type="project" value="InterPro"/>
</dbReference>
<dbReference type="GO" id="GO:0015979">
    <property type="term" value="P:photosynthesis"/>
    <property type="evidence" value="ECO:0007669"/>
    <property type="project" value="UniProtKB-UniRule"/>
</dbReference>
<dbReference type="GO" id="GO:0050821">
    <property type="term" value="P:protein stabilization"/>
    <property type="evidence" value="ECO:0007669"/>
    <property type="project" value="InterPro"/>
</dbReference>
<dbReference type="Gene3D" id="1.20.5.880">
    <property type="entry name" value="Photosystem II reaction center protein H"/>
    <property type="match status" value="1"/>
</dbReference>
<dbReference type="HAMAP" id="MF_00752">
    <property type="entry name" value="PSII_PsbH"/>
    <property type="match status" value="1"/>
</dbReference>
<dbReference type="InterPro" id="IPR001056">
    <property type="entry name" value="PSII_PsbH"/>
</dbReference>
<dbReference type="InterPro" id="IPR036863">
    <property type="entry name" value="PSII_PsbH_sf"/>
</dbReference>
<dbReference type="NCBIfam" id="NF002728">
    <property type="entry name" value="PRK02624.1"/>
    <property type="match status" value="1"/>
</dbReference>
<dbReference type="PANTHER" id="PTHR34469">
    <property type="entry name" value="PHOTOSYSTEM II REACTION CENTER PROTEIN H"/>
    <property type="match status" value="1"/>
</dbReference>
<dbReference type="PANTHER" id="PTHR34469:SF4">
    <property type="entry name" value="PHOTOSYSTEM II REACTION CENTER PROTEIN H"/>
    <property type="match status" value="1"/>
</dbReference>
<dbReference type="Pfam" id="PF00737">
    <property type="entry name" value="PsbH"/>
    <property type="match status" value="1"/>
</dbReference>
<dbReference type="SUPFAM" id="SSF161025">
    <property type="entry name" value="Photosystem II 10 kDa phosphoprotein PsbH"/>
    <property type="match status" value="1"/>
</dbReference>
<reference key="1">
    <citation type="journal article" date="2007" name="PLoS Genet.">
        <title>Patterns and implications of gene gain and loss in the evolution of Prochlorococcus.</title>
        <authorList>
            <person name="Kettler G.C."/>
            <person name="Martiny A.C."/>
            <person name="Huang K."/>
            <person name="Zucker J."/>
            <person name="Coleman M.L."/>
            <person name="Rodrigue S."/>
            <person name="Chen F."/>
            <person name="Lapidus A."/>
            <person name="Ferriera S."/>
            <person name="Johnson J."/>
            <person name="Steglich C."/>
            <person name="Church G.M."/>
            <person name="Richardson P."/>
            <person name="Chisholm S.W."/>
        </authorList>
    </citation>
    <scope>NUCLEOTIDE SEQUENCE [LARGE SCALE GENOMIC DNA]</scope>
    <source>
        <strain>MIT 9515</strain>
    </source>
</reference>
<feature type="chain" id="PRO_1000046588" description="Photosystem II reaction center protein H">
    <location>
        <begin position="1"/>
        <end position="66"/>
    </location>
</feature>
<feature type="transmembrane region" description="Helical" evidence="1">
    <location>
        <begin position="27"/>
        <end position="47"/>
    </location>
</feature>
<evidence type="ECO:0000255" key="1">
    <source>
        <dbReference type="HAMAP-Rule" id="MF_00752"/>
    </source>
</evidence>
<evidence type="ECO:0000305" key="2"/>
<organism>
    <name type="scientific">Prochlorococcus marinus (strain MIT 9515)</name>
    <dbReference type="NCBI Taxonomy" id="167542"/>
    <lineage>
        <taxon>Bacteria</taxon>
        <taxon>Bacillati</taxon>
        <taxon>Cyanobacteriota</taxon>
        <taxon>Cyanophyceae</taxon>
        <taxon>Synechococcales</taxon>
        <taxon>Prochlorococcaceae</taxon>
        <taxon>Prochlorococcus</taxon>
    </lineage>
</organism>
<comment type="function">
    <text evidence="1">One of the components of the core complex of photosystem II (PSII), required for its stability and/or assembly. PSII is a light-driven water:plastoquinone oxidoreductase that uses light energy to abstract electrons from H(2)O, generating O(2) and a proton gradient subsequently used for ATP formation. It consists of a core antenna complex that captures photons, and an electron transfer chain that converts photonic excitation into a charge separation.</text>
</comment>
<comment type="subunit">
    <text evidence="2">PSII is composed of 1 copy each of membrane proteins PsbA, PsbB, PsbC, PsbD, PsbE, PsbF, PsbH, PsbI, PsbJ, PsbK, PsbL, PsbM, PsbT, PsbX, PsbY, Psb30/Ycf12, peripheral proteins PsbO, CyanoQ (PsbQ), PsbU, PsbV and a large number of cofactors. It forms dimeric complexes.</text>
</comment>
<comment type="subcellular location">
    <subcellularLocation>
        <location evidence="1">Cellular thylakoid membrane</location>
        <topology evidence="1">Single-pass membrane protein</topology>
    </subcellularLocation>
</comment>
<comment type="similarity">
    <text evidence="1">Belongs to the PsbH family.</text>
</comment>
<keyword id="KW-0472">Membrane</keyword>
<keyword id="KW-0602">Photosynthesis</keyword>
<keyword id="KW-0604">Photosystem II</keyword>
<keyword id="KW-0793">Thylakoid</keyword>
<keyword id="KW-0812">Transmembrane</keyword>
<keyword id="KW-1133">Transmembrane helix</keyword>
<gene>
    <name evidence="1" type="primary">psbH</name>
    <name type="ordered locus">P9515_02841</name>
</gene>